<comment type="function">
    <text evidence="1">Catalyzes the removal of a penultimate prolyl residue from the N-termini of peptides.</text>
</comment>
<comment type="catalytic activity">
    <reaction>
        <text>Release of any N-terminal amino acid, including proline, that is linked to proline, even from a dipeptide or tripeptide.</text>
        <dbReference type="EC" id="3.4.11.9"/>
    </reaction>
</comment>
<comment type="cofactor">
    <cofactor evidence="1">
        <name>Mn(2+)</name>
        <dbReference type="ChEBI" id="CHEBI:29035"/>
    </cofactor>
    <text evidence="1">Binds 2 manganese ions per subunit.</text>
</comment>
<comment type="similarity">
    <text evidence="2">Belongs to the peptidase M24B family.</text>
</comment>
<feature type="chain" id="PRO_0000411803" description="Probable Xaa-Pro aminopeptidase P">
    <location>
        <begin position="1"/>
        <end position="613"/>
    </location>
</feature>
<feature type="binding site" evidence="1">
    <location>
        <position position="408"/>
    </location>
    <ligand>
        <name>Mn(2+)</name>
        <dbReference type="ChEBI" id="CHEBI:29035"/>
        <label>2</label>
    </ligand>
</feature>
<feature type="binding site" evidence="1">
    <location>
        <position position="419"/>
    </location>
    <ligand>
        <name>Mn(2+)</name>
        <dbReference type="ChEBI" id="CHEBI:29035"/>
        <label>1</label>
    </ligand>
</feature>
<feature type="binding site" evidence="1">
    <location>
        <position position="419"/>
    </location>
    <ligand>
        <name>Mn(2+)</name>
        <dbReference type="ChEBI" id="CHEBI:29035"/>
        <label>2</label>
    </ligand>
</feature>
<feature type="binding site" evidence="1">
    <location>
        <position position="517"/>
    </location>
    <ligand>
        <name>Mn(2+)</name>
        <dbReference type="ChEBI" id="CHEBI:29035"/>
        <label>1</label>
    </ligand>
</feature>
<feature type="binding site" evidence="1">
    <location>
        <position position="531"/>
    </location>
    <ligand>
        <name>Mn(2+)</name>
        <dbReference type="ChEBI" id="CHEBI:29035"/>
        <label>1</label>
    </ligand>
</feature>
<feature type="binding site" evidence="1">
    <location>
        <position position="531"/>
    </location>
    <ligand>
        <name>Mn(2+)</name>
        <dbReference type="ChEBI" id="CHEBI:29035"/>
        <label>2</label>
    </ligand>
</feature>
<dbReference type="EC" id="3.4.11.9"/>
<dbReference type="EMBL" id="AM920437">
    <property type="protein sequence ID" value="CAP98879.1"/>
    <property type="molecule type" value="Genomic_DNA"/>
</dbReference>
<dbReference type="RefSeq" id="XP_002565507.1">
    <property type="nucleotide sequence ID" value="XM_002565461.1"/>
</dbReference>
<dbReference type="SMR" id="B6HQC9"/>
<dbReference type="STRING" id="500485.B6HQC9"/>
<dbReference type="MEROPS" id="M24.009"/>
<dbReference type="GeneID" id="8305145"/>
<dbReference type="KEGG" id="pcs:N7525_004796"/>
<dbReference type="VEuPathDB" id="FungiDB:PCH_Pc22g15910"/>
<dbReference type="eggNOG" id="KOG2413">
    <property type="taxonomic scope" value="Eukaryota"/>
</dbReference>
<dbReference type="HOGENOM" id="CLU_011781_2_2_1"/>
<dbReference type="OMA" id="EPGMILS"/>
<dbReference type="OrthoDB" id="9995434at2759"/>
<dbReference type="BioCyc" id="PCHR:PC22G15910-MONOMER"/>
<dbReference type="Proteomes" id="UP000000724">
    <property type="component" value="Contig Pc00c22"/>
</dbReference>
<dbReference type="GO" id="GO:0005737">
    <property type="term" value="C:cytoplasm"/>
    <property type="evidence" value="ECO:0007669"/>
    <property type="project" value="UniProtKB-ARBA"/>
</dbReference>
<dbReference type="GO" id="GO:0046872">
    <property type="term" value="F:metal ion binding"/>
    <property type="evidence" value="ECO:0007669"/>
    <property type="project" value="UniProtKB-KW"/>
</dbReference>
<dbReference type="GO" id="GO:0070006">
    <property type="term" value="F:metalloaminopeptidase activity"/>
    <property type="evidence" value="ECO:0007669"/>
    <property type="project" value="InterPro"/>
</dbReference>
<dbReference type="GO" id="GO:0006508">
    <property type="term" value="P:proteolysis"/>
    <property type="evidence" value="ECO:0007669"/>
    <property type="project" value="UniProtKB-KW"/>
</dbReference>
<dbReference type="CDD" id="cd01085">
    <property type="entry name" value="APP"/>
    <property type="match status" value="1"/>
</dbReference>
<dbReference type="FunFam" id="3.40.350.10:FF:000010">
    <property type="entry name" value="Probable Xaa-Pro aminopeptidase P"/>
    <property type="match status" value="1"/>
</dbReference>
<dbReference type="FunFam" id="3.90.230.10:FF:000007">
    <property type="entry name" value="Xaa-Pro aminopeptidase P"/>
    <property type="match status" value="1"/>
</dbReference>
<dbReference type="FunFam" id="3.40.350.10:FF:000003">
    <property type="entry name" value="Xaa-pro aminopeptidase P"/>
    <property type="match status" value="1"/>
</dbReference>
<dbReference type="Gene3D" id="3.90.230.10">
    <property type="entry name" value="Creatinase/methionine aminopeptidase superfamily"/>
    <property type="match status" value="1"/>
</dbReference>
<dbReference type="Gene3D" id="3.40.350.10">
    <property type="entry name" value="Creatinase/prolidase N-terminal domain"/>
    <property type="match status" value="2"/>
</dbReference>
<dbReference type="InterPro" id="IPR029149">
    <property type="entry name" value="Creatin/AminoP/Spt16_N"/>
</dbReference>
<dbReference type="InterPro" id="IPR036005">
    <property type="entry name" value="Creatinase/aminopeptidase-like"/>
</dbReference>
<dbReference type="InterPro" id="IPR000587">
    <property type="entry name" value="Creatinase_N"/>
</dbReference>
<dbReference type="InterPro" id="IPR000994">
    <property type="entry name" value="Pept_M24"/>
</dbReference>
<dbReference type="InterPro" id="IPR033740">
    <property type="entry name" value="Pept_M24B"/>
</dbReference>
<dbReference type="InterPro" id="IPR032416">
    <property type="entry name" value="Peptidase_M24_C"/>
</dbReference>
<dbReference type="InterPro" id="IPR001131">
    <property type="entry name" value="Peptidase_M24B_aminopep-P_CS"/>
</dbReference>
<dbReference type="InterPro" id="IPR050422">
    <property type="entry name" value="X-Pro_aminopeptidase_P"/>
</dbReference>
<dbReference type="PANTHER" id="PTHR43763">
    <property type="entry name" value="XAA-PRO AMINOPEPTIDASE 1"/>
    <property type="match status" value="1"/>
</dbReference>
<dbReference type="PANTHER" id="PTHR43763:SF6">
    <property type="entry name" value="XAA-PRO AMINOPEPTIDASE 1"/>
    <property type="match status" value="1"/>
</dbReference>
<dbReference type="Pfam" id="PF01321">
    <property type="entry name" value="Creatinase_N"/>
    <property type="match status" value="1"/>
</dbReference>
<dbReference type="Pfam" id="PF16189">
    <property type="entry name" value="Creatinase_N_2"/>
    <property type="match status" value="1"/>
</dbReference>
<dbReference type="Pfam" id="PF00557">
    <property type="entry name" value="Peptidase_M24"/>
    <property type="match status" value="1"/>
</dbReference>
<dbReference type="Pfam" id="PF16188">
    <property type="entry name" value="Peptidase_M24_C"/>
    <property type="match status" value="1"/>
</dbReference>
<dbReference type="SUPFAM" id="SSF55920">
    <property type="entry name" value="Creatinase/aminopeptidase"/>
    <property type="match status" value="1"/>
</dbReference>
<dbReference type="SUPFAM" id="SSF53092">
    <property type="entry name" value="Creatinase/prolidase N-terminal domain"/>
    <property type="match status" value="1"/>
</dbReference>
<dbReference type="PROSITE" id="PS00491">
    <property type="entry name" value="PROLINE_PEPTIDASE"/>
    <property type="match status" value="1"/>
</dbReference>
<reference key="1">
    <citation type="journal article" date="2008" name="Nat. Biotechnol.">
        <title>Genome sequencing and analysis of the filamentous fungus Penicillium chrysogenum.</title>
        <authorList>
            <person name="van den Berg M.A."/>
            <person name="Albang R."/>
            <person name="Albermann K."/>
            <person name="Badger J.H."/>
            <person name="Daran J.-M."/>
            <person name="Driessen A.J.M."/>
            <person name="Garcia-Estrada C."/>
            <person name="Fedorova N.D."/>
            <person name="Harris D.M."/>
            <person name="Heijne W.H.M."/>
            <person name="Joardar V.S."/>
            <person name="Kiel J.A.K.W."/>
            <person name="Kovalchuk A."/>
            <person name="Martin J.F."/>
            <person name="Nierman W.C."/>
            <person name="Nijland J.G."/>
            <person name="Pronk J.T."/>
            <person name="Roubos J.A."/>
            <person name="van der Klei I.J."/>
            <person name="van Peij N.N.M.E."/>
            <person name="Veenhuis M."/>
            <person name="von Doehren H."/>
            <person name="Wagner C."/>
            <person name="Wortman J.R."/>
            <person name="Bovenberg R.A.L."/>
        </authorList>
    </citation>
    <scope>NUCLEOTIDE SEQUENCE [LARGE SCALE GENOMIC DNA]</scope>
    <source>
        <strain>ATCC 28089 / DSM 1075 / NRRL 1951 / Wisconsin 54-1255</strain>
    </source>
</reference>
<accession>B6HQC9</accession>
<sequence length="613" mass="67743">MGAVDTSERLSKLRQLMQQHKVDVYIVPSEDSHQSEYIAPCDARREFISGFSGSAGTAIISLSKAALSTDGRYFNQAAKQLDNNWQLLKGGVEGVPTWQEWTTEEAQGGKAVGVDPSLITASGARKLAETLKKNGSSLVGVRENLVDLVWGKERPARPSEKVRVHPEKYAGKTFQEKVAELRKELESKKKAGFVISMLDEIAWLFNLRGTDIPYNPVFFSYAVITPTTAEIYVEDDKLTPEVKAHLGQDVVVKPYESIFADAQALSTKSQSAGENAAKFLLSNKASWALSLSLGGEGQVEEARSPVADAKAIKNETELEGMRACHIRDGAALTEYFAWLENELINKKTVLDEVDGADKLEQIRSKHDLFAGLSFDTISSTGPNGAVIHYKPEKGSCAIIDPSAIYLCDSGCQYFDGTTDTTRTFHFGVPTEFEKRAFTLVLKGTIGIDMAVFPKGTSGFAIDVLARQHLWREGLDFLHGTGHGVGSYLNVHEGPIGIGTRVQYTEVPIAAGNVISDEPGYYEDGKFGIRIENIVMAREVKTAHNFGDKQWLGFEHVTMTPIGRNLIEPSLLSDAELKWVNDYHAEIWAKTEHFFREDNLTRSWLERETQPISK</sequence>
<gene>
    <name type="primary">ampp</name>
    <name type="ORF">Pc22g15910</name>
</gene>
<evidence type="ECO:0000250" key="1"/>
<evidence type="ECO:0000305" key="2"/>
<protein>
    <recommendedName>
        <fullName>Probable Xaa-Pro aminopeptidase P</fullName>
        <shortName>AMPP</shortName>
        <shortName>Aminopeptidase P</shortName>
        <ecNumber>3.4.11.9</ecNumber>
    </recommendedName>
    <alternativeName>
        <fullName>Aminoacylproline aminopeptidase</fullName>
    </alternativeName>
    <alternativeName>
        <fullName>Prolidase</fullName>
    </alternativeName>
</protein>
<organism>
    <name type="scientific">Penicillium rubens (strain ATCC 28089 / DSM 1075 / NRRL 1951 / Wisconsin 54-1255)</name>
    <name type="common">Penicillium chrysogenum</name>
    <dbReference type="NCBI Taxonomy" id="500485"/>
    <lineage>
        <taxon>Eukaryota</taxon>
        <taxon>Fungi</taxon>
        <taxon>Dikarya</taxon>
        <taxon>Ascomycota</taxon>
        <taxon>Pezizomycotina</taxon>
        <taxon>Eurotiomycetes</taxon>
        <taxon>Eurotiomycetidae</taxon>
        <taxon>Eurotiales</taxon>
        <taxon>Aspergillaceae</taxon>
        <taxon>Penicillium</taxon>
        <taxon>Penicillium chrysogenum species complex</taxon>
    </lineage>
</organism>
<keyword id="KW-0031">Aminopeptidase</keyword>
<keyword id="KW-0378">Hydrolase</keyword>
<keyword id="KW-0464">Manganese</keyword>
<keyword id="KW-0479">Metal-binding</keyword>
<keyword id="KW-0482">Metalloprotease</keyword>
<keyword id="KW-0645">Protease</keyword>
<keyword id="KW-1185">Reference proteome</keyword>
<name>AMPP1_PENRW</name>
<proteinExistence type="inferred from homology"/>